<proteinExistence type="evidence at transcript level"/>
<reference key="1">
    <citation type="submission" date="1997-10" db="EMBL/GenBank/DDBJ databases">
        <authorList>
            <person name="Abuladze N."/>
            <person name="Pushkin A."/>
            <person name="Kurtz I."/>
        </authorList>
    </citation>
    <scope>NUCLEOTIDE SEQUENCE [MRNA]</scope>
    <source>
        <tissue>Kidney</tissue>
    </source>
</reference>
<feature type="chain" id="PRO_0000079221" description="Anion exchange protein 3">
    <location>
        <begin position="1"/>
        <end position="1233"/>
    </location>
</feature>
<feature type="topological domain" description="Cytoplasmic">
    <location>
        <begin position="1"/>
        <end position="709"/>
    </location>
</feature>
<feature type="transmembrane region" description="Helical" evidence="5">
    <location>
        <begin position="710"/>
        <end position="732"/>
    </location>
</feature>
<feature type="transmembrane region" description="Helical" evidence="5">
    <location>
        <begin position="738"/>
        <end position="775"/>
    </location>
</feature>
<feature type="transmembrane region" description="Helical" evidence="5">
    <location>
        <begin position="795"/>
        <end position="817"/>
    </location>
</feature>
<feature type="transmembrane region" description="Helical" evidence="5">
    <location>
        <begin position="827"/>
        <end position="848"/>
    </location>
</feature>
<feature type="transmembrane region" description="Helical" evidence="5">
    <location>
        <begin position="894"/>
        <end position="911"/>
    </location>
</feature>
<feature type="topological domain" description="Cytoplasmic" evidence="5">
    <location>
        <begin position="912"/>
        <end position="926"/>
    </location>
</feature>
<feature type="transmembrane region" description="Helical" evidence="5">
    <location>
        <begin position="927"/>
        <end position="947"/>
    </location>
</feature>
<feature type="transmembrane region" description="Helical" evidence="5">
    <location>
        <begin position="981"/>
        <end position="1003"/>
    </location>
</feature>
<feature type="transmembrane region" description="Helical" evidence="5">
    <location>
        <begin position="1029"/>
        <end position="1050"/>
    </location>
</feature>
<feature type="transmembrane region" description="Helical" evidence="5">
    <location>
        <begin position="1084"/>
        <end position="1129"/>
    </location>
</feature>
<feature type="transmembrane region" description="Helical" evidence="5">
    <location>
        <begin position="1156"/>
        <end position="1192"/>
    </location>
</feature>
<feature type="region of interest" description="Disordered" evidence="6">
    <location>
        <begin position="1"/>
        <end position="320"/>
    </location>
</feature>
<feature type="region of interest" description="Disordered" evidence="6">
    <location>
        <begin position="431"/>
        <end position="500"/>
    </location>
</feature>
<feature type="region of interest" description="Membrane (anion exchange)">
    <location>
        <begin position="710"/>
        <end position="1233"/>
    </location>
</feature>
<feature type="compositionally biased region" description="Pro residues" evidence="6">
    <location>
        <begin position="1"/>
        <end position="11"/>
    </location>
</feature>
<feature type="compositionally biased region" description="Basic and acidic residues" evidence="6">
    <location>
        <begin position="58"/>
        <end position="73"/>
    </location>
</feature>
<feature type="compositionally biased region" description="Basic residues" evidence="6">
    <location>
        <begin position="74"/>
        <end position="97"/>
    </location>
</feature>
<feature type="compositionally biased region" description="Basic residues" evidence="6">
    <location>
        <begin position="104"/>
        <end position="113"/>
    </location>
</feature>
<feature type="compositionally biased region" description="Acidic residues" evidence="6">
    <location>
        <begin position="137"/>
        <end position="153"/>
    </location>
</feature>
<feature type="compositionally biased region" description="Low complexity" evidence="6">
    <location>
        <begin position="201"/>
        <end position="216"/>
    </location>
</feature>
<feature type="compositionally biased region" description="Basic and acidic residues" evidence="6">
    <location>
        <begin position="268"/>
        <end position="290"/>
    </location>
</feature>
<feature type="compositionally biased region" description="Low complexity" evidence="6">
    <location>
        <begin position="437"/>
        <end position="450"/>
    </location>
</feature>
<feature type="compositionally biased region" description="Basic and acidic residues" evidence="6">
    <location>
        <begin position="482"/>
        <end position="500"/>
    </location>
</feature>
<feature type="modified residue" description="Phosphoserine" evidence="2">
    <location>
        <position position="168"/>
    </location>
</feature>
<feature type="modified residue" description="Phosphoserine" evidence="2">
    <location>
        <position position="171"/>
    </location>
</feature>
<feature type="modified residue" description="Phosphoserine" evidence="3">
    <location>
        <position position="176"/>
    </location>
</feature>
<feature type="modified residue" description="Phosphoserine" evidence="2">
    <location>
        <position position="199"/>
    </location>
</feature>
<feature type="modified residue" description="Omega-N-methylarginine" evidence="2">
    <location>
        <position position="296"/>
    </location>
</feature>
<feature type="lipid moiety-binding region" description="S-palmitoyl cysteine" evidence="1">
    <location>
        <position position="1166"/>
    </location>
</feature>
<feature type="glycosylation site" description="N-linked (GlcNAc...) asparagine" evidence="5">
    <location>
        <position position="874"/>
    </location>
</feature>
<comment type="function">
    <text evidence="4">Sodium-independent anion exchanger which mediates the electroneutral exchange of chloride for bicarbonate ions across the cell membrane. May be involved in the regulation of intracellular pH, and the modulation of cardiac action potential.</text>
</comment>
<comment type="catalytic activity">
    <reaction evidence="2">
        <text>hydrogencarbonate(in) + chloride(out) = hydrogencarbonate(out) + chloride(in)</text>
        <dbReference type="Rhea" id="RHEA:72363"/>
        <dbReference type="ChEBI" id="CHEBI:17544"/>
        <dbReference type="ChEBI" id="CHEBI:17996"/>
    </reaction>
</comment>
<comment type="subcellular location">
    <subcellularLocation>
        <location evidence="2">Cell membrane</location>
        <topology evidence="5">Multi-pass membrane protein</topology>
    </subcellularLocation>
</comment>
<comment type="similarity">
    <text evidence="7">Belongs to the anion exchanger (TC 2.A.31) family.</text>
</comment>
<accession>O18917</accession>
<gene>
    <name type="primary">SLC4A3</name>
    <name type="synonym">AE3</name>
</gene>
<sequence length="1233" mass="135760">MANGVIPPPGGASPLPQVRVPLEEPPLSPDTEEEDDDLGKTLAVSRFGDLISKPPAWDPEKPSRSFSERDFAFHRHISHHTHHPLSARLPPPHKLRRLPPTFARHTRRKRKKEKTSAPPSEGTPPIQEEGGAGAHEGEEEEEEEEEGESETEAVEPPPSGSPQKAKFSIGSDEDDSPGLPGKAAFTKPLPSVGPRSDKSPQRSVSSSSPRARAPRVAGERSRPWSPSASYDLRERLCPGSALGNPGGPEQQVPTDEAEAQMLGSADLDDMKSHRLEDNPGVRRHLVKEPSRVQGGRGSRGGLTPTLRRKKKKQQPDRRPHEVFVELNELMLDRSQEPHWRETARWIKFEEDVEEETERWGKPHVASLSFRSLLELRRTIAHGAALLDLEQTTLPGIAHLVVETMIVSDQIRPEDRASVLRTLLLKHCHPNDDKDCGSFPRNPSSSSVNSVLGNHHATPSHGPDGAVPTMADDLGEPAPLWPHDPDAKERPLHMPGGDGHRGKSLKLLEKIPEDAEATVVLVGCVPFLEQPAAAFVRLSEAVLLESVLEVPVPVRFLFVMLGPSHISTDYHELGRSIATLMSDKLFHEAAYQADDRQDLLGAISEFLDGSIVIPPSEVEGRDLLRSVAAFQRELLRKRREREQTKVEMTTRGGYLAPGKELALELGGSDAAPEDDPLLRTGSVFGGLIRDVKRRYPHYPSDLRDALHSQCVAAVLFIYFAALSPAITFGGLLGEKTEGLMGVSELIVSTAVLGVLFSLLGAQPLLVVGFSGPLLVFEGAFFKFCQAQDLEYLTGRVWVGLWLVVFVLALVGAEGTFLVRYISPFTQEIFAFLISLIFIYETFHKLYKVFTEHPLLPFYPREGALEGAPEARLELNGSAPPPTEGPPGPRNQPNTALLSLILMLGTFLIAFFLRKFRNSRFLGGKARRIIGDFGIPISILLMVLVDYSITDTYTQKLTVPTGLSVTSPHKRTWFIPPLGSARPFPPWMMVAAAVPALLVLILIFMETQITALIVSQKARRLLKGSGFHLDLLLIGSLGGLCGLFGLPWLTAATVRSVTHVNALTVMRTAIAPGDKPQIQEVREQRVTGVLIASLVGLSIVMGAVLRRIPLAVLFGIFLYMGVTSLSGIQLSQRLLLILMPAKHHPEQPYVTKVKTWRMHLFTCIQLACIALLWVVKSTAASLAFPFLLLLTVPLRRCLLPRLFQDRELQALDSEDAEPNFDEDGQDEYNELHMPV</sequence>
<keyword id="KW-0039">Anion exchange</keyword>
<keyword id="KW-0050">Antiport</keyword>
<keyword id="KW-1003">Cell membrane</keyword>
<keyword id="KW-0325">Glycoprotein</keyword>
<keyword id="KW-0406">Ion transport</keyword>
<keyword id="KW-0449">Lipoprotein</keyword>
<keyword id="KW-0472">Membrane</keyword>
<keyword id="KW-0488">Methylation</keyword>
<keyword id="KW-0564">Palmitate</keyword>
<keyword id="KW-0597">Phosphoprotein</keyword>
<keyword id="KW-1185">Reference proteome</keyword>
<keyword id="KW-0812">Transmembrane</keyword>
<keyword id="KW-1133">Transmembrane helix</keyword>
<keyword id="KW-0813">Transport</keyword>
<dbReference type="EMBL" id="AF031650">
    <property type="protein sequence ID" value="AAB86859.1"/>
    <property type="molecule type" value="mRNA"/>
</dbReference>
<dbReference type="RefSeq" id="NP_001075499.1">
    <property type="nucleotide sequence ID" value="NM_001082030.1"/>
</dbReference>
<dbReference type="SMR" id="O18917"/>
<dbReference type="FunCoup" id="O18917">
    <property type="interactions" value="80"/>
</dbReference>
<dbReference type="STRING" id="9986.ENSOCUP00000009785"/>
<dbReference type="GlyCosmos" id="O18917">
    <property type="glycosylation" value="1 site, No reported glycans"/>
</dbReference>
<dbReference type="PaxDb" id="9986-ENSOCUP00000009785"/>
<dbReference type="GeneID" id="100008675"/>
<dbReference type="KEGG" id="ocu:100008675"/>
<dbReference type="CTD" id="6508"/>
<dbReference type="eggNOG" id="KOG1172">
    <property type="taxonomic scope" value="Eukaryota"/>
</dbReference>
<dbReference type="InParanoid" id="O18917"/>
<dbReference type="OrthoDB" id="1735926at2759"/>
<dbReference type="Proteomes" id="UP000001811">
    <property type="component" value="Unplaced"/>
</dbReference>
<dbReference type="GO" id="GO:0005886">
    <property type="term" value="C:plasma membrane"/>
    <property type="evidence" value="ECO:0000250"/>
    <property type="project" value="UniProtKB"/>
</dbReference>
<dbReference type="GO" id="GO:0140900">
    <property type="term" value="F:chloride:bicarbonate antiporter activity"/>
    <property type="evidence" value="ECO:0000250"/>
    <property type="project" value="UniProtKB"/>
</dbReference>
<dbReference type="GO" id="GO:0045851">
    <property type="term" value="P:pH reduction"/>
    <property type="evidence" value="ECO:0000250"/>
    <property type="project" value="UniProtKB"/>
</dbReference>
<dbReference type="GO" id="GO:0098901">
    <property type="term" value="P:regulation of cardiac muscle cell action potential"/>
    <property type="evidence" value="ECO:0000250"/>
    <property type="project" value="UniProtKB"/>
</dbReference>
<dbReference type="GO" id="GO:0051453">
    <property type="term" value="P:regulation of intracellular pH"/>
    <property type="evidence" value="ECO:0007669"/>
    <property type="project" value="TreeGrafter"/>
</dbReference>
<dbReference type="FunFam" id="1.10.287.570:FF:000001">
    <property type="entry name" value="Anion exchange protein"/>
    <property type="match status" value="1"/>
</dbReference>
<dbReference type="FunFam" id="3.40.930.10:FF:000004">
    <property type="entry name" value="Anion exchange protein"/>
    <property type="match status" value="1"/>
</dbReference>
<dbReference type="Gene3D" id="1.10.287.570">
    <property type="entry name" value="Helical hairpin bin"/>
    <property type="match status" value="1"/>
</dbReference>
<dbReference type="Gene3D" id="3.40.930.10">
    <property type="entry name" value="Mannitol-specific EII, Chain A"/>
    <property type="match status" value="1"/>
</dbReference>
<dbReference type="InterPro" id="IPR001717">
    <property type="entry name" value="Anion_exchange"/>
</dbReference>
<dbReference type="InterPro" id="IPR002979">
    <property type="entry name" value="Anion_exchange_3"/>
</dbReference>
<dbReference type="InterPro" id="IPR018241">
    <property type="entry name" value="Anion_exchange_CS"/>
</dbReference>
<dbReference type="InterPro" id="IPR013769">
    <property type="entry name" value="Band3_cytoplasmic_dom"/>
</dbReference>
<dbReference type="InterPro" id="IPR011531">
    <property type="entry name" value="HCO3_transpt-like_TM_dom"/>
</dbReference>
<dbReference type="InterPro" id="IPR003020">
    <property type="entry name" value="HCO3_transpt_euk"/>
</dbReference>
<dbReference type="InterPro" id="IPR016152">
    <property type="entry name" value="PTrfase/Anion_transptr"/>
</dbReference>
<dbReference type="NCBIfam" id="TIGR00834">
    <property type="entry name" value="ae"/>
    <property type="match status" value="1"/>
</dbReference>
<dbReference type="PANTHER" id="PTHR11453">
    <property type="entry name" value="ANION EXCHANGE PROTEIN"/>
    <property type="match status" value="1"/>
</dbReference>
<dbReference type="PANTHER" id="PTHR11453:SF15">
    <property type="entry name" value="ANION EXCHANGE PROTEIN 3"/>
    <property type="match status" value="1"/>
</dbReference>
<dbReference type="Pfam" id="PF07565">
    <property type="entry name" value="Band_3_cyto"/>
    <property type="match status" value="1"/>
</dbReference>
<dbReference type="Pfam" id="PF00955">
    <property type="entry name" value="HCO3_cotransp"/>
    <property type="match status" value="2"/>
</dbReference>
<dbReference type="PRINTS" id="PR00165">
    <property type="entry name" value="ANIONEXCHNGR"/>
</dbReference>
<dbReference type="PRINTS" id="PR01189">
    <property type="entry name" value="ANIONEXHNGR3"/>
</dbReference>
<dbReference type="PRINTS" id="PR01231">
    <property type="entry name" value="HCO3TRNSPORT"/>
</dbReference>
<dbReference type="SUPFAM" id="SSF55804">
    <property type="entry name" value="Phoshotransferase/anion transport protein"/>
    <property type="match status" value="1"/>
</dbReference>
<dbReference type="PROSITE" id="PS00219">
    <property type="entry name" value="ANION_EXCHANGER_1"/>
    <property type="match status" value="1"/>
</dbReference>
<dbReference type="PROSITE" id="PS00220">
    <property type="entry name" value="ANION_EXCHANGER_2"/>
    <property type="match status" value="1"/>
</dbReference>
<name>B3A3_RABIT</name>
<evidence type="ECO:0000250" key="1"/>
<evidence type="ECO:0000250" key="2">
    <source>
        <dbReference type="UniProtKB" id="P16283"/>
    </source>
</evidence>
<evidence type="ECO:0000250" key="3">
    <source>
        <dbReference type="UniProtKB" id="P23348"/>
    </source>
</evidence>
<evidence type="ECO:0000250" key="4">
    <source>
        <dbReference type="UniProtKB" id="P48751"/>
    </source>
</evidence>
<evidence type="ECO:0000255" key="5"/>
<evidence type="ECO:0000256" key="6">
    <source>
        <dbReference type="SAM" id="MobiDB-lite"/>
    </source>
</evidence>
<evidence type="ECO:0000305" key="7"/>
<organism>
    <name type="scientific">Oryctolagus cuniculus</name>
    <name type="common">Rabbit</name>
    <dbReference type="NCBI Taxonomy" id="9986"/>
    <lineage>
        <taxon>Eukaryota</taxon>
        <taxon>Metazoa</taxon>
        <taxon>Chordata</taxon>
        <taxon>Craniata</taxon>
        <taxon>Vertebrata</taxon>
        <taxon>Euteleostomi</taxon>
        <taxon>Mammalia</taxon>
        <taxon>Eutheria</taxon>
        <taxon>Euarchontoglires</taxon>
        <taxon>Glires</taxon>
        <taxon>Lagomorpha</taxon>
        <taxon>Leporidae</taxon>
        <taxon>Oryctolagus</taxon>
    </lineage>
</organism>
<protein>
    <recommendedName>
        <fullName>Anion exchange protein 3</fullName>
        <shortName>AE 3</shortName>
        <shortName>Anion exchanger 3</shortName>
    </recommendedName>
    <alternativeName>
        <fullName>Anion exchanger 3 brain isoform</fullName>
    </alternativeName>
    <alternativeName>
        <fullName>Neuronal band 3-like protein</fullName>
    </alternativeName>
    <alternativeName>
        <fullName>Solute carrier family 4 member 3</fullName>
    </alternativeName>
</protein>